<name>RS20_BURM9</name>
<feature type="chain" id="PRO_1000014558" description="Small ribosomal subunit protein bS20">
    <location>
        <begin position="1"/>
        <end position="92"/>
    </location>
</feature>
<feature type="region of interest" description="Disordered" evidence="2">
    <location>
        <begin position="1"/>
        <end position="25"/>
    </location>
</feature>
<proteinExistence type="inferred from homology"/>
<gene>
    <name evidence="1" type="primary">rpsT</name>
    <name type="ordered locus">BMA10229_A2512</name>
</gene>
<protein>
    <recommendedName>
        <fullName evidence="1">Small ribosomal subunit protein bS20</fullName>
    </recommendedName>
    <alternativeName>
        <fullName evidence="3">30S ribosomal protein S20</fullName>
    </alternativeName>
</protein>
<evidence type="ECO:0000255" key="1">
    <source>
        <dbReference type="HAMAP-Rule" id="MF_00500"/>
    </source>
</evidence>
<evidence type="ECO:0000256" key="2">
    <source>
        <dbReference type="SAM" id="MobiDB-lite"/>
    </source>
</evidence>
<evidence type="ECO:0000305" key="3"/>
<organism>
    <name type="scientific">Burkholderia mallei (strain NCTC 10229)</name>
    <dbReference type="NCBI Taxonomy" id="412022"/>
    <lineage>
        <taxon>Bacteria</taxon>
        <taxon>Pseudomonadati</taxon>
        <taxon>Pseudomonadota</taxon>
        <taxon>Betaproteobacteria</taxon>
        <taxon>Burkholderiales</taxon>
        <taxon>Burkholderiaceae</taxon>
        <taxon>Burkholderia</taxon>
        <taxon>pseudomallei group</taxon>
    </lineage>
</organism>
<keyword id="KW-0687">Ribonucleoprotein</keyword>
<keyword id="KW-0689">Ribosomal protein</keyword>
<keyword id="KW-0694">RNA-binding</keyword>
<keyword id="KW-0699">rRNA-binding</keyword>
<comment type="function">
    <text evidence="1">Binds directly to 16S ribosomal RNA.</text>
</comment>
<comment type="similarity">
    <text evidence="1">Belongs to the bacterial ribosomal protein bS20 family.</text>
</comment>
<reference key="1">
    <citation type="journal article" date="2010" name="Genome Biol. Evol.">
        <title>Continuing evolution of Burkholderia mallei through genome reduction and large-scale rearrangements.</title>
        <authorList>
            <person name="Losada L."/>
            <person name="Ronning C.M."/>
            <person name="DeShazer D."/>
            <person name="Woods D."/>
            <person name="Fedorova N."/>
            <person name="Kim H.S."/>
            <person name="Shabalina S.A."/>
            <person name="Pearson T.R."/>
            <person name="Brinkac L."/>
            <person name="Tan P."/>
            <person name="Nandi T."/>
            <person name="Crabtree J."/>
            <person name="Badger J."/>
            <person name="Beckstrom-Sternberg S."/>
            <person name="Saqib M."/>
            <person name="Schutzer S.E."/>
            <person name="Keim P."/>
            <person name="Nierman W.C."/>
        </authorList>
    </citation>
    <scope>NUCLEOTIDE SEQUENCE [LARGE SCALE GENOMIC DNA]</scope>
    <source>
        <strain>NCTC 10229</strain>
    </source>
</reference>
<sequence>MANSAQARKRARQAAKANSHNSALRSKFRTAIKAVRKAIDAGDQAKAAELFKAATKTIDTIADKKIVHKNKAARHKSRLSAAVKGLQAQAAQ</sequence>
<accession>A2S951</accession>
<dbReference type="EMBL" id="CP000546">
    <property type="protein sequence ID" value="ABN01702.1"/>
    <property type="molecule type" value="Genomic_DNA"/>
</dbReference>
<dbReference type="RefSeq" id="WP_004189743.1">
    <property type="nucleotide sequence ID" value="NC_008836.1"/>
</dbReference>
<dbReference type="SMR" id="A2S951"/>
<dbReference type="GeneID" id="93059378"/>
<dbReference type="KEGG" id="bml:BMA10229_A2512"/>
<dbReference type="HOGENOM" id="CLU_160655_4_0_4"/>
<dbReference type="Proteomes" id="UP000002283">
    <property type="component" value="Chromosome I"/>
</dbReference>
<dbReference type="GO" id="GO:0005829">
    <property type="term" value="C:cytosol"/>
    <property type="evidence" value="ECO:0007669"/>
    <property type="project" value="TreeGrafter"/>
</dbReference>
<dbReference type="GO" id="GO:0015935">
    <property type="term" value="C:small ribosomal subunit"/>
    <property type="evidence" value="ECO:0007669"/>
    <property type="project" value="TreeGrafter"/>
</dbReference>
<dbReference type="GO" id="GO:0070181">
    <property type="term" value="F:small ribosomal subunit rRNA binding"/>
    <property type="evidence" value="ECO:0007669"/>
    <property type="project" value="TreeGrafter"/>
</dbReference>
<dbReference type="GO" id="GO:0003735">
    <property type="term" value="F:structural constituent of ribosome"/>
    <property type="evidence" value="ECO:0007669"/>
    <property type="project" value="InterPro"/>
</dbReference>
<dbReference type="GO" id="GO:0006412">
    <property type="term" value="P:translation"/>
    <property type="evidence" value="ECO:0007669"/>
    <property type="project" value="UniProtKB-UniRule"/>
</dbReference>
<dbReference type="FunFam" id="1.20.58.110:FF:000001">
    <property type="entry name" value="30S ribosomal protein S20"/>
    <property type="match status" value="1"/>
</dbReference>
<dbReference type="Gene3D" id="1.20.58.110">
    <property type="entry name" value="Ribosomal protein S20"/>
    <property type="match status" value="1"/>
</dbReference>
<dbReference type="HAMAP" id="MF_00500">
    <property type="entry name" value="Ribosomal_bS20"/>
    <property type="match status" value="1"/>
</dbReference>
<dbReference type="InterPro" id="IPR002583">
    <property type="entry name" value="Ribosomal_bS20"/>
</dbReference>
<dbReference type="InterPro" id="IPR036510">
    <property type="entry name" value="Ribosomal_bS20_sf"/>
</dbReference>
<dbReference type="NCBIfam" id="TIGR00029">
    <property type="entry name" value="S20"/>
    <property type="match status" value="1"/>
</dbReference>
<dbReference type="PANTHER" id="PTHR33398">
    <property type="entry name" value="30S RIBOSOMAL PROTEIN S20"/>
    <property type="match status" value="1"/>
</dbReference>
<dbReference type="PANTHER" id="PTHR33398:SF1">
    <property type="entry name" value="SMALL RIBOSOMAL SUBUNIT PROTEIN BS20C"/>
    <property type="match status" value="1"/>
</dbReference>
<dbReference type="Pfam" id="PF01649">
    <property type="entry name" value="Ribosomal_S20p"/>
    <property type="match status" value="1"/>
</dbReference>
<dbReference type="SUPFAM" id="SSF46992">
    <property type="entry name" value="Ribosomal protein S20"/>
    <property type="match status" value="1"/>
</dbReference>